<reference key="1">
    <citation type="journal article" date="1999" name="Domest. Anim. Endocrinol.">
        <title>The characterization of ovine genes for atrial, brain, and C-type natriuretic peptides.</title>
        <authorList>
            <person name="Aitken G.D."/>
            <person name="Raizis A.M."/>
            <person name="Yandle T.G."/>
            <person name="George P.M."/>
            <person name="Espiner E.A."/>
            <person name="Cameron V.A."/>
        </authorList>
    </citation>
    <scope>NUCLEOTIDE SEQUENCE [GENOMIC DNA]</scope>
</reference>
<keyword id="KW-0966">Cell projection</keyword>
<keyword id="KW-1015">Disulfide bond</keyword>
<keyword id="KW-0372">Hormone</keyword>
<keyword id="KW-0597">Phosphoprotein</keyword>
<keyword id="KW-1185">Reference proteome</keyword>
<keyword id="KW-0964">Secreted</keyword>
<keyword id="KW-0732">Signal</keyword>
<keyword id="KW-0838">Vasoactive</keyword>
<keyword id="KW-0840">Vasodilator</keyword>
<name>ANF_SHEEP</name>
<proteinExistence type="inferred from homology"/>
<evidence type="ECO:0000250" key="1">
    <source>
        <dbReference type="UniProtKB" id="P01160"/>
    </source>
</evidence>
<evidence type="ECO:0000250" key="2">
    <source>
        <dbReference type="UniProtKB" id="P01161"/>
    </source>
</evidence>
<evidence type="ECO:0000250" key="3">
    <source>
        <dbReference type="UniProtKB" id="P05125"/>
    </source>
</evidence>
<evidence type="ECO:0000250" key="4">
    <source>
        <dbReference type="UniProtKB" id="P24259"/>
    </source>
</evidence>
<evidence type="ECO:0000256" key="5">
    <source>
        <dbReference type="SAM" id="MobiDB-lite"/>
    </source>
</evidence>
<evidence type="ECO:0000305" key="6"/>
<gene>
    <name type="primary">NPPA</name>
</gene>
<organism>
    <name type="scientific">Ovis aries</name>
    <name type="common">Sheep</name>
    <dbReference type="NCBI Taxonomy" id="9940"/>
    <lineage>
        <taxon>Eukaryota</taxon>
        <taxon>Metazoa</taxon>
        <taxon>Chordata</taxon>
        <taxon>Craniata</taxon>
        <taxon>Vertebrata</taxon>
        <taxon>Euteleostomi</taxon>
        <taxon>Mammalia</taxon>
        <taxon>Eutheria</taxon>
        <taxon>Laurasiatheria</taxon>
        <taxon>Artiodactyla</taxon>
        <taxon>Ruminantia</taxon>
        <taxon>Pecora</taxon>
        <taxon>Bovidae</taxon>
        <taxon>Caprinae</taxon>
        <taxon>Ovis</taxon>
    </lineage>
</organism>
<comment type="function">
    <molecule>Atrial natriuretic peptide</molecule>
    <text evidence="1 3">Hormone that plays a key role in mediating cardio-renal homeostasis, and is involved in vascular remodeling and regulating energy metabolism (By similarity). Acts by specifically binding and stimulating NPR1 to produce cGMP, which in turn activates effector proteins, such as PRKG1, that drive various biological responses (By similarity). Regulates vasodilation, natriuresis, diuresis and aldosterone synthesis and is therefore essential for regulating blood pressure, controlling the extracellular fluid volume and maintaining the fluid-electrolyte balance (By similarity). Also involved in inhibiting cardiac remodeling and cardiac hypertrophy by inducing cardiomyocyte apoptosis and attenuating the growth of cardiomyocytes and fibroblasts (By similarity). Plays a role in female pregnancy by promoting trophoblast invasion and spiral artery remodeling in uterus, and thus prevents pregnancy-induced hypertension (By similarity). In adipose tissue, acts in various cGMP- and PKG-dependent pathways to regulate lipid metabolism and energy homeostasis (By similarity). This includes up-regulating lipid metabolism and mitochondrial oxygen utilization by activating the AMP-activated protein kinase (AMPK), and increasing energy expenditure by acting via MAPK11 to promote the UCP1-dependent thermogenesis of brown adipose tissue (By similarity). Binds the clearance receptor NPR3 which removes the hormone from circulation (By similarity).</text>
</comment>
<comment type="function">
    <molecule>Long-acting natriuretic peptide</molecule>
    <text evidence="1 2">May have a role in cardio-renal homeostasis through regulation of natriuresis, diuresis, vasodilation, and inhibiting aldosterone synthesis. In vitro, promotes the production of cGMP and induces vasodilation. May promote natriuresis, at least in part, by enhancing prostaglandin E2 synthesis resulting in the inhibition of renal Na+-K+-ATPase (By similarity). However reports on the involvement of this peptide in mammal blood volume and blood pressure homeostasis are conflicting; according to a report, in vivo it is not sufficient to activate cGMP and does not inhibit collecting duct transport nor effect diuresis and natriuresis (By similarity). Appears to bind to specific receptors that are distinct from the receptors bound by atrial natriuretic peptide and vessel dilator. Possibly enhances protein excretion in urine by decreasing proximal tubular protein reabsorption (By similarity).</text>
</comment>
<comment type="function">
    <molecule>Vessel dilator</molecule>
    <text evidence="1">May have a role in cardio-renal homeostasis through regulation of natriuresis, diuresis, and vasodilation. In vitro, promotes the production of cGMP and induces vasodilation. May promote natriuresis, at least in part, by enhancing prostaglandin E2 synthesis resulting in the inhibition of renal Na+-K+-ATPase. However reports on the involvement of this peptide in mammal blood volume and blood pressure homeostasis are conflicting; according to a report it is not sufficient to activate cGMP and does not inhibit collecting duct transport nor effect diuresis and natriuresis. Appears to bind to specific receptors that are distinct from the receptors bound by the atrial natriuretic and long-acting natriuretic peptides. Possibly functions in protein excretion in urine by maintaining the integrity of the proximal tubules and enhancing protein excretion by decreasing proximal tubular protein reabsorption.</text>
</comment>
<comment type="function">
    <molecule>Kaliuretic peptide</molecule>
    <text evidence="1">May have a role in cardio-renal homeostasis through regulation of diuresis and inhibiting aldosterone synthesis. In vitro, promotes the production of cGMP and induces vasodilation. May promote natriuresis, at least in part, by enhancing prostaglandin E2 synthesis resulting in the inhibition of renal Na+-K+-ATPase. May have a role in potassium excretion but not sodium excretion (natriuresis). Possibly enhances protein excretion in urine by decreasing proximal tubular protein reabsorption.</text>
</comment>
<comment type="function">
    <molecule>Urodilatin</molecule>
    <text evidence="1">Hormone produced in the kidneys that appears to be important for maintaining cardio-renal homeostasis. Mediates vasodilation, natriuresis and diuresis primarily in the renal system, in order to maintain the extracellular fluid volume and control the fluid-electrolyte balance. Specifically binds and stimulates cGMP production by renal transmembrane receptors, likely NPR1. Urodilatin not ANP, may be the natriuretic peptide responsible for the regulation of sodium and water homeostasis in the kidney.</text>
</comment>
<comment type="function">
    <molecule>Auriculin-D</molecule>
    <text evidence="2">May have a role in cardio-renal homeostasis through regulation of natriuresis and vasodilation. In vivo promotes natriuresis and in vitro, vasodilates renal artery strips.</text>
</comment>
<comment type="function">
    <molecule>Auriculin-B</molecule>
    <text evidence="2">May have a role in cardio-renal homeostasis through regulation of natriuresis and vasodilation. In vivo promotes natriuresis and in vitro, vasodilates renal artery strips.</text>
</comment>
<comment type="function">
    <molecule>Auriculin-A</molecule>
    <text evidence="2">May have a role in cardio-renal homeostasis through regulation of regulation of natriuresis and vasodilation. In vivo promotes natriuresis. In vitro, vasodilates intestinal smooth muscle but not smooth muscle strips.</text>
</comment>
<comment type="function">
    <molecule>Atriopeptin-2</molecule>
    <text evidence="2">May have a role in cardio-renal homeostasis through regulation of natriuresis and vasodilation. In vivo promotes natriuresis. In vitro, selectively vasodilates intestinal and vascular smooth muscle strips.</text>
</comment>
<comment type="function">
    <molecule>Atriopeptin-1</molecule>
    <text evidence="2">May have a role in cardio-renal homeostasis through regulation of natriuresis and vasodilation. In vivo promotes natriuresis. In vitro, selectively vasodilates intestinal smooth muscle but not vascular smooth muscle strips.</text>
</comment>
<comment type="subunit">
    <molecule>Atrial natriuretic peptide</molecule>
    <text evidence="1">Homodimer; disulfide-linked antiparallel dimer.</text>
</comment>
<comment type="subcellular location">
    <molecule>Long-acting natriuretic peptide</molecule>
    <subcellularLocation>
        <location evidence="1">Secreted</location>
    </subcellularLocation>
    <text evidence="1">Detected in blood.</text>
</comment>
<comment type="subcellular location">
    <molecule>Vessel dilator</molecule>
    <subcellularLocation>
        <location evidence="1">Secreted</location>
    </subcellularLocation>
    <text evidence="1">Detected in blood.</text>
</comment>
<comment type="subcellular location">
    <molecule>Kaliuretic peptide</molecule>
    <subcellularLocation>
        <location evidence="1">Secreted</location>
    </subcellularLocation>
    <text evidence="1">Detected in blood.</text>
</comment>
<comment type="subcellular location">
    <molecule>Urodilatin</molecule>
    <subcellularLocation>
        <location evidence="1">Secreted</location>
    </subcellularLocation>
    <text evidence="1">Detected in urine. Not detected in blood. Increased electrolytes, osmolality and intracellular cAMP levels increase peptide secretion/excretion.</text>
</comment>
<comment type="subcellular location">
    <molecule>Atrial natriuretic peptide</molecule>
    <subcellularLocation>
        <location evidence="1">Secreted</location>
    </subcellularLocation>
    <subcellularLocation>
        <location evidence="1">Perikaryon</location>
    </subcellularLocation>
    <subcellularLocation>
        <location evidence="1">Cell projection</location>
    </subcellularLocation>
    <text evidence="1 2">Detected in blood. Detected in urine in one study. However, in another study, was not detected in urine. Detected in cytoplasmic bodies and neuronal processes of pyramidal neurons (layers II-VI) (By similarity). Increased secretion in response to the vasopressin AVP (By similarity). Likely to be secreted in response to an increase in atrial pressure or atrial stretch. In kidney cells, secretion increases in response to activated guanylyl cyclases and increased intracellular cAMP levels. Plasma levels increase 15 minutes after a high-salt meal, and decrease back to normal plasma levels 1 hr later (By similarity).</text>
</comment>
<comment type="subcellular location">
    <molecule>Atriopeptin-3</molecule>
    <subcellularLocation>
        <location evidence="2">Secreted</location>
    </subcellularLocation>
    <text evidence="2">Detected in blood. Slight increase in secretion in response to the vasopressin AVP.</text>
</comment>
<comment type="PTM">
    <text evidence="1 2">The precursor molecule is proteolytically cleaved by CORIN at Arg-122 to produce the atrial natriuretic peptide (By similarity). Undergoes further proteolytic cleavage by unknown proteases to give rise to long-acting natriuretic peptide, vessel dilator and kaliuretic peptide (By similarity). Additional processing gives rise to the auriculin and atriopeptin peptides (By similarity). In the kidneys, alternative processing by an unknown protease results in the peptide urodilatin (By similarity).</text>
</comment>
<comment type="PTM">
    <molecule>Atrial natriuretic peptide</molecule>
    <text evidence="1">Cleavage by MME initiates degradation of the factor and thereby regulates its activity. Degradation by IDE results in reduced activation of NPR1 (in vitro). During IDE degradation, the resulting products can temporarily stimulate NPR2 to produce cGMP, before the fragments are completely degraded and inactivated by IDE (in vitro).</text>
</comment>
<comment type="PTM">
    <molecule>Urodilatin</molecule>
    <text evidence="1">Degraded by IDE.</text>
</comment>
<comment type="PTM">
    <molecule>Urodilatin</molecule>
    <text evidence="1">Phosphorylation on Ser-128 decreases vasorelaxant activity.</text>
</comment>
<comment type="similarity">
    <text evidence="6">Belongs to the natriuretic peptide family.</text>
</comment>
<comment type="caution">
    <molecule>Long-acting natriuretic peptide</molecule>
    <text evidence="1 2">Results concerning the involvement of this peptide in blood volume and blood pressure homeostasis are conflicting. Several studies utilising in vitro and heterologous expression systems show that it is able to activate cGMP and promote vasodilation and natriuresis (By similarity). However, an in vivo study in rat found that it is not sufficient to induce any diuretic, natriuretic, nor hypotensive responses, and is unable to bind NPR1 nor increase guanylyl cyclase activity (By similarity).</text>
</comment>
<comment type="caution">
    <molecule>Vessel dilator</molecule>
    <text evidence="1 2">Results concerning the involvement of this peptide in blood volume and blood pressure homeostasis are conflicting. Several studies utilising in vitro and heterologous expression systems show that it is able to activate cGMP and promote vasodilation and natriuresis (By similarity). However, a heterologous and in vivo expression study in rat found that it is not sufficient to induce any diuretic, natriuretic, nor hypotensive responses, and is unable to bind NPR1 nor increase guanylyl cyclase activity (By similarity).</text>
</comment>
<feature type="signal peptide" evidence="4">
    <location>
        <begin position="1"/>
        <end position="24"/>
    </location>
</feature>
<feature type="chain" id="PRO_0000449778" description="Natriuretic peptides A" evidence="1">
    <location>
        <begin position="25"/>
        <end position="150"/>
    </location>
</feature>
<feature type="propeptide" id="PRO_0000001511" evidence="6">
    <location>
        <begin position="25"/>
        <end position="122"/>
    </location>
</feature>
<feature type="peptide" id="PRO_0000449779" description="Long-acting natriuretic peptide" evidence="1">
    <location>
        <begin position="25"/>
        <end position="54"/>
    </location>
</feature>
<feature type="peptide" id="PRO_0000449780" description="Vessel dilator" evidence="1">
    <location>
        <begin position="55"/>
        <end position="91"/>
    </location>
</feature>
<feature type="propeptide" id="PRO_0000449781" evidence="1">
    <location>
        <begin position="92"/>
        <end position="102"/>
    </location>
</feature>
<feature type="peptide" id="PRO_0000449782" description="Kaliuretic peptide" evidence="1">
    <location>
        <begin position="103"/>
        <end position="122"/>
    </location>
</feature>
<feature type="peptide" id="PRO_0000449783" description="Auriculin-C" evidence="2">
    <location>
        <begin position="118"/>
        <end position="150"/>
    </location>
</feature>
<feature type="peptide" id="PRO_0000449784" description="Urodilatin" evidence="1">
    <location>
        <begin position="119"/>
        <end position="150"/>
    </location>
</feature>
<feature type="peptide" id="PRO_0000449785" description="Auriculin-D" evidence="2">
    <location>
        <begin position="120"/>
        <end position="144"/>
    </location>
</feature>
<feature type="peptide" id="PRO_0000001512" description="Atrial natriuretic peptide" evidence="1">
    <location>
        <begin position="123"/>
        <end position="150"/>
    </location>
</feature>
<feature type="peptide" id="PRO_0000449786" description="Auriculin-B" evidence="2">
    <location>
        <begin position="126"/>
        <end position="150"/>
    </location>
</feature>
<feature type="peptide" id="PRO_0000449787" description="Auriculin-A" evidence="2">
    <location>
        <begin position="126"/>
        <end position="149"/>
    </location>
</feature>
<feature type="peptide" id="PRO_0000449788" description="Atriopeptin-3" evidence="2">
    <location>
        <begin position="127"/>
        <end position="150"/>
    </location>
</feature>
<feature type="peptide" id="PRO_0000449789" description="Atriopeptin-2" evidence="2">
    <location>
        <begin position="127"/>
        <end position="149"/>
    </location>
</feature>
<feature type="peptide" id="PRO_0000449790" description="Atriopeptin-1" evidence="2">
    <location>
        <begin position="127"/>
        <end position="147"/>
    </location>
</feature>
<feature type="region of interest" description="Disordered" evidence="5">
    <location>
        <begin position="50"/>
        <end position="108"/>
    </location>
</feature>
<feature type="region of interest" description="Important for degradation of atrial natriuretic peptide by IDE" evidence="1">
    <location>
        <begin position="146"/>
        <end position="150"/>
    </location>
</feature>
<feature type="site" description="Cleavage; by CORIN" evidence="1">
    <location>
        <begin position="122"/>
        <end position="123"/>
    </location>
</feature>
<feature type="site" description="Cleavage; by MME" evidence="1">
    <location>
        <begin position="129"/>
        <end position="130"/>
    </location>
</feature>
<feature type="modified residue" description="Phosphoserine" evidence="1">
    <location>
        <position position="128"/>
    </location>
</feature>
<feature type="disulfide bond" evidence="1">
    <location>
        <begin position="129"/>
        <end position="145"/>
    </location>
</feature>
<protein>
    <recommendedName>
        <fullName evidence="6">Natriuretic peptides A</fullName>
    </recommendedName>
    <alternativeName>
        <fullName evidence="1">Atrial natriuretic factor prohormone</fullName>
        <shortName evidence="2">preproANF</shortName>
        <shortName evidence="1">proANF</shortName>
    </alternativeName>
    <alternativeName>
        <fullName evidence="1">Atrial natriuretic peptide prohormone</fullName>
        <shortName evidence="1">preproANP</shortName>
        <shortName evidence="1">proANP</shortName>
    </alternativeName>
    <alternativeName>
        <fullName evidence="2">Atriopeptigen</fullName>
    </alternativeName>
    <alternativeName>
        <fullName evidence="1">Cardiodilatin</fullName>
        <shortName evidence="1">CDD</shortName>
    </alternativeName>
    <alternativeName>
        <fullName evidence="1">preproCDD-ANF</fullName>
    </alternativeName>
    <component>
        <recommendedName>
            <fullName evidence="1">Long-acting natriuretic peptide</fullName>
            <shortName evidence="1">LANP</shortName>
        </recommendedName>
        <alternativeName>
            <fullName evidence="6">Long-acting natriuretic hormone</fullName>
            <shortName evidence="6">LANH</shortName>
        </alternativeName>
        <alternativeName>
            <fullName evidence="1">Pro atrial natriuretic factor 1-30</fullName>
            <shortName evidence="1">proANF 1-30</shortName>
        </alternativeName>
        <alternativeName>
            <fullName evidence="6">Pro atrial natriuretic peptide 1-30</fullName>
            <shortName evidence="6">proANP 1-30</shortName>
        </alternativeName>
    </component>
    <component>
        <recommendedName>
            <fullName evidence="1">Vessel dilator</fullName>
            <shortName evidence="1">VSDL</shortName>
        </recommendedName>
        <alternativeName>
            <fullName evidence="1">Pro atrial natriuretic factor 31-67</fullName>
            <shortName evidence="1">proANF 31-67</shortName>
        </alternativeName>
        <alternativeName>
            <fullName evidence="6">Pro atrial natriuretic peptide 31-67</fullName>
            <shortName evidence="6">proANP 31-67</shortName>
        </alternativeName>
    </component>
    <component>
        <recommendedName>
            <fullName evidence="1">Kaliuretic peptide</fullName>
            <shortName evidence="1">KP</shortName>
        </recommendedName>
        <alternativeName>
            <fullName evidence="1">Pro atrial natriuretic factor 79-98</fullName>
            <shortName evidence="1">proANF 79-98</shortName>
        </alternativeName>
        <alternativeName>
            <fullName evidence="6">Pro atrial natriuretic peptide 79-98</fullName>
            <shortName evidence="6">proANP 79-98</shortName>
        </alternativeName>
    </component>
    <component>
        <recommendedName>
            <fullName evidence="1">Urodilatin</fullName>
            <shortName evidence="1">URO</shortName>
        </recommendedName>
        <alternativeName>
            <fullName evidence="1">CDD 95-126</fullName>
        </alternativeName>
        <alternativeName>
            <fullName evidence="1">CDD-ANP (95-126)</fullName>
        </alternativeName>
        <alternativeName>
            <fullName evidence="1">Pro atrial natriuretic peptide 95-126</fullName>
            <shortName evidence="1">proANP 95-126</shortName>
        </alternativeName>
    </component>
    <component>
        <recommendedName>
            <fullName evidence="6">Auriculin-C</fullName>
        </recommendedName>
        <alternativeName>
            <fullName evidence="2">Atrial natriuretic factor 1-33</fullName>
            <shortName evidence="2">ANF 1-33</shortName>
        </alternativeName>
    </component>
    <component>
        <recommendedName>
            <fullName evidence="6">Auriculin-D</fullName>
        </recommendedName>
        <alternativeName>
            <fullName evidence="2">Atrial natriuretic factor 3-33</fullName>
            <shortName evidence="2">ANF 3-33</shortName>
        </alternativeName>
    </component>
    <component>
        <recommendedName>
            <fullName evidence="1">Atrial natriuretic peptide</fullName>
            <shortName evidence="1">ANP</shortName>
        </recommendedName>
        <alternativeName>
            <fullName evidence="1">Alpha-atrial natriuretic peptide</fullName>
        </alternativeName>
        <alternativeName>
            <fullName evidence="1">Alpha-hANP</fullName>
        </alternativeName>
        <alternativeName>
            <fullName evidence="1">Atrial natriuretic factor</fullName>
            <shortName evidence="1">ANF</shortName>
        </alternativeName>
        <alternativeName>
            <fullName evidence="1">CDD-ANF</fullName>
        </alternativeName>
        <alternativeName>
            <fullName evidence="1">CDD-ANP (99-126)</fullName>
        </alternativeName>
        <alternativeName>
            <fullName evidence="2">Cardionatrin</fullName>
        </alternativeName>
        <alternativeName>
            <fullName evidence="1">Pro atrial natriuretic factor 99-126</fullName>
            <shortName evidence="1">proANF 99-126</shortName>
        </alternativeName>
    </component>
    <component>
        <recommendedName>
            <fullName evidence="6">Auriculin-B</fullName>
        </recommendedName>
        <alternativeName>
            <fullName evidence="2">Atrial natriuretic factor 8-33</fullName>
            <shortName evidence="2">ANF 8-33</shortName>
        </alternativeName>
    </component>
    <component>
        <recommendedName>
            <fullName evidence="2">Auriculin-A</fullName>
        </recommendedName>
    </component>
    <component>
        <recommendedName>
            <fullName evidence="2">Atriopeptin-1</fullName>
        </recommendedName>
        <alternativeName>
            <fullName evidence="2">Atriopeptin I</fullName>
        </alternativeName>
    </component>
    <component>
        <recommendedName>
            <fullName evidence="2">Atriopeptin-2</fullName>
        </recommendedName>
        <alternativeName>
            <fullName evidence="2">Atriopeptin II</fullName>
        </alternativeName>
    </component>
    <component>
        <recommendedName>
            <fullName evidence="2">Atriopeptin-3</fullName>
        </recommendedName>
        <alternativeName>
            <fullName evidence="2">Atriopeptin III</fullName>
        </alternativeName>
    </component>
</protein>
<dbReference type="EMBL" id="AF037465">
    <property type="protein sequence ID" value="AAB92564.1"/>
    <property type="molecule type" value="Genomic_DNA"/>
</dbReference>
<dbReference type="RefSeq" id="NP_001153499.1">
    <property type="nucleotide sequence ID" value="NM_001160027.1"/>
</dbReference>
<dbReference type="STRING" id="9940.ENSOARP00000019562"/>
<dbReference type="GeneID" id="100294648"/>
<dbReference type="KEGG" id="oas:100294648"/>
<dbReference type="CTD" id="4878"/>
<dbReference type="OrthoDB" id="8865096at2759"/>
<dbReference type="Proteomes" id="UP000002356">
    <property type="component" value="Unplaced"/>
</dbReference>
<dbReference type="GO" id="GO:0042995">
    <property type="term" value="C:cell projection"/>
    <property type="evidence" value="ECO:0007669"/>
    <property type="project" value="UniProtKB-SubCell"/>
</dbReference>
<dbReference type="GO" id="GO:0005737">
    <property type="term" value="C:cytoplasm"/>
    <property type="evidence" value="ECO:0007669"/>
    <property type="project" value="TreeGrafter"/>
</dbReference>
<dbReference type="GO" id="GO:0005615">
    <property type="term" value="C:extracellular space"/>
    <property type="evidence" value="ECO:0007669"/>
    <property type="project" value="TreeGrafter"/>
</dbReference>
<dbReference type="GO" id="GO:0043204">
    <property type="term" value="C:perikaryon"/>
    <property type="evidence" value="ECO:0007669"/>
    <property type="project" value="UniProtKB-SubCell"/>
</dbReference>
<dbReference type="GO" id="GO:0005179">
    <property type="term" value="F:hormone activity"/>
    <property type="evidence" value="ECO:0007669"/>
    <property type="project" value="UniProtKB-KW"/>
</dbReference>
<dbReference type="GO" id="GO:0051427">
    <property type="term" value="F:hormone receptor binding"/>
    <property type="evidence" value="ECO:0007669"/>
    <property type="project" value="TreeGrafter"/>
</dbReference>
<dbReference type="GO" id="GO:0006182">
    <property type="term" value="P:cGMP biosynthetic process"/>
    <property type="evidence" value="ECO:0000250"/>
    <property type="project" value="UniProtKB"/>
</dbReference>
<dbReference type="GO" id="GO:0019934">
    <property type="term" value="P:cGMP-mediated signaling"/>
    <property type="evidence" value="ECO:0007669"/>
    <property type="project" value="TreeGrafter"/>
</dbReference>
<dbReference type="GO" id="GO:0007565">
    <property type="term" value="P:female pregnancy"/>
    <property type="evidence" value="ECO:0000250"/>
    <property type="project" value="UniProtKB"/>
</dbReference>
<dbReference type="GO" id="GO:0003085">
    <property type="term" value="P:negative regulation of systemic arterial blood pressure"/>
    <property type="evidence" value="ECO:0007669"/>
    <property type="project" value="TreeGrafter"/>
</dbReference>
<dbReference type="GO" id="GO:0007218">
    <property type="term" value="P:neuropeptide signaling pathway"/>
    <property type="evidence" value="ECO:0007669"/>
    <property type="project" value="TreeGrafter"/>
</dbReference>
<dbReference type="GO" id="GO:0007168">
    <property type="term" value="P:receptor guanylyl cyclase signaling pathway"/>
    <property type="evidence" value="ECO:0000250"/>
    <property type="project" value="UniProtKB"/>
</dbReference>
<dbReference type="GO" id="GO:0008217">
    <property type="term" value="P:regulation of blood pressure"/>
    <property type="evidence" value="ECO:0000250"/>
    <property type="project" value="UniProtKB"/>
</dbReference>
<dbReference type="GO" id="GO:0042311">
    <property type="term" value="P:vasodilation"/>
    <property type="evidence" value="ECO:0007669"/>
    <property type="project" value="UniProtKB-KW"/>
</dbReference>
<dbReference type="InterPro" id="IPR000663">
    <property type="entry name" value="Natr_peptide"/>
</dbReference>
<dbReference type="InterPro" id="IPR030480">
    <property type="entry name" value="Natr_peptide_CS"/>
</dbReference>
<dbReference type="InterPro" id="IPR050787">
    <property type="entry name" value="Natriuretic_peptide"/>
</dbReference>
<dbReference type="InterPro" id="IPR002407">
    <property type="entry name" value="Natriuretic_peptide_atrial"/>
</dbReference>
<dbReference type="PANTHER" id="PTHR14066">
    <property type="entry name" value="ATRIAL NATRIURETIC FACTOR PRECURSOR"/>
    <property type="match status" value="1"/>
</dbReference>
<dbReference type="PANTHER" id="PTHR14066:SF2">
    <property type="entry name" value="NATRIURETIC PEPTIDES A"/>
    <property type="match status" value="1"/>
</dbReference>
<dbReference type="Pfam" id="PF00212">
    <property type="entry name" value="ANP"/>
    <property type="match status" value="1"/>
</dbReference>
<dbReference type="PRINTS" id="PR00711">
    <property type="entry name" value="ANATPEPTIDE"/>
</dbReference>
<dbReference type="PRINTS" id="PR00710">
    <property type="entry name" value="NATPEPTIDES"/>
</dbReference>
<dbReference type="SMART" id="SM00183">
    <property type="entry name" value="NAT_PEP"/>
    <property type="match status" value="1"/>
</dbReference>
<dbReference type="PROSITE" id="PS00263">
    <property type="entry name" value="NATRIURETIC_PEPTIDE"/>
    <property type="match status" value="1"/>
</dbReference>
<accession>O46540</accession>
<sequence length="152" mass="16368">MGSSAITTSFLLFVAFQLPGQTGANPVYGSVSNADLMDFKNLLDRLEDKMPLEDEAVPSQVLSEQNEEAGAPLSPLSEVPPWDGGRSTQPREMGAPSDGDPGNPPRSVLLKSKLRALLTAPRSLRRSSCFGGRMDRIGAQSGLGCNSFRYRR</sequence>